<protein>
    <recommendedName>
        <fullName evidence="1">L-arabinose isomerase</fullName>
        <ecNumber evidence="1">5.3.1.4</ecNumber>
    </recommendedName>
</protein>
<accession>Q8FL89</accession>
<dbReference type="EC" id="5.3.1.4" evidence="1"/>
<dbReference type="EMBL" id="AE014075">
    <property type="protein sequence ID" value="AAN78570.1"/>
    <property type="molecule type" value="Genomic_DNA"/>
</dbReference>
<dbReference type="RefSeq" id="WP_000151731.1">
    <property type="nucleotide sequence ID" value="NZ_CP051263.1"/>
</dbReference>
<dbReference type="SMR" id="Q8FL89"/>
<dbReference type="STRING" id="199310.c0074"/>
<dbReference type="KEGG" id="ecc:c0074"/>
<dbReference type="eggNOG" id="COG2160">
    <property type="taxonomic scope" value="Bacteria"/>
</dbReference>
<dbReference type="HOGENOM" id="CLU_045663_0_0_6"/>
<dbReference type="BioCyc" id="ECOL199310:C0074-MONOMER"/>
<dbReference type="BRENDA" id="5.3.1.4">
    <property type="organism ID" value="2026"/>
</dbReference>
<dbReference type="UniPathway" id="UPA00145">
    <property type="reaction ID" value="UER00565"/>
</dbReference>
<dbReference type="Proteomes" id="UP000001410">
    <property type="component" value="Chromosome"/>
</dbReference>
<dbReference type="GO" id="GO:0005829">
    <property type="term" value="C:cytosol"/>
    <property type="evidence" value="ECO:0007669"/>
    <property type="project" value="TreeGrafter"/>
</dbReference>
<dbReference type="GO" id="GO:0008733">
    <property type="term" value="F:L-arabinose isomerase activity"/>
    <property type="evidence" value="ECO:0007669"/>
    <property type="project" value="UniProtKB-UniRule"/>
</dbReference>
<dbReference type="GO" id="GO:0030145">
    <property type="term" value="F:manganese ion binding"/>
    <property type="evidence" value="ECO:0007669"/>
    <property type="project" value="UniProtKB-UniRule"/>
</dbReference>
<dbReference type="GO" id="GO:0019569">
    <property type="term" value="P:L-arabinose catabolic process to xylulose 5-phosphate"/>
    <property type="evidence" value="ECO:0007669"/>
    <property type="project" value="UniProtKB-UniRule"/>
</dbReference>
<dbReference type="CDD" id="cd03557">
    <property type="entry name" value="L-arabinose_isomerase"/>
    <property type="match status" value="1"/>
</dbReference>
<dbReference type="FunFam" id="3.40.50.10940:FF:000001">
    <property type="entry name" value="L-arabinose isomerase"/>
    <property type="match status" value="1"/>
</dbReference>
<dbReference type="Gene3D" id="3.40.50.10940">
    <property type="match status" value="1"/>
</dbReference>
<dbReference type="HAMAP" id="MF_00519">
    <property type="entry name" value="Arabinose_Isome"/>
    <property type="match status" value="1"/>
</dbReference>
<dbReference type="InterPro" id="IPR024664">
    <property type="entry name" value="Ara_Isoase_C"/>
</dbReference>
<dbReference type="InterPro" id="IPR055390">
    <property type="entry name" value="AraA_central"/>
</dbReference>
<dbReference type="InterPro" id="IPR055389">
    <property type="entry name" value="AraA_N"/>
</dbReference>
<dbReference type="InterPro" id="IPR038583">
    <property type="entry name" value="AraA_N_sf"/>
</dbReference>
<dbReference type="InterPro" id="IPR004216">
    <property type="entry name" value="Fuc/Ara_isomerase_C"/>
</dbReference>
<dbReference type="InterPro" id="IPR009015">
    <property type="entry name" value="Fucose_isomerase_N/cen_sf"/>
</dbReference>
<dbReference type="InterPro" id="IPR003762">
    <property type="entry name" value="Lara_isomerase"/>
</dbReference>
<dbReference type="NCBIfam" id="NF002795">
    <property type="entry name" value="PRK02929.1"/>
    <property type="match status" value="1"/>
</dbReference>
<dbReference type="PANTHER" id="PTHR38464">
    <property type="entry name" value="L-ARABINOSE ISOMERASE"/>
    <property type="match status" value="1"/>
</dbReference>
<dbReference type="PANTHER" id="PTHR38464:SF1">
    <property type="entry name" value="L-ARABINOSE ISOMERASE"/>
    <property type="match status" value="1"/>
</dbReference>
<dbReference type="Pfam" id="PF24856">
    <property type="entry name" value="AraA_central"/>
    <property type="match status" value="1"/>
</dbReference>
<dbReference type="Pfam" id="PF02610">
    <property type="entry name" value="AraA_N"/>
    <property type="match status" value="1"/>
</dbReference>
<dbReference type="Pfam" id="PF11762">
    <property type="entry name" value="Arabinose_Iso_C"/>
    <property type="match status" value="1"/>
</dbReference>
<dbReference type="PIRSF" id="PIRSF001478">
    <property type="entry name" value="L-ara_isomerase"/>
    <property type="match status" value="1"/>
</dbReference>
<dbReference type="SUPFAM" id="SSF50443">
    <property type="entry name" value="FucI/AraA C-terminal domain-like"/>
    <property type="match status" value="1"/>
</dbReference>
<dbReference type="SUPFAM" id="SSF53743">
    <property type="entry name" value="FucI/AraA N-terminal and middle domains"/>
    <property type="match status" value="1"/>
</dbReference>
<comment type="function">
    <text evidence="1">Catalyzes the conversion of L-arabinose to L-ribulose.</text>
</comment>
<comment type="catalytic activity">
    <reaction evidence="1">
        <text>beta-L-arabinopyranose = L-ribulose</text>
        <dbReference type="Rhea" id="RHEA:14821"/>
        <dbReference type="ChEBI" id="CHEBI:16880"/>
        <dbReference type="ChEBI" id="CHEBI:40886"/>
        <dbReference type="EC" id="5.3.1.4"/>
    </reaction>
</comment>
<comment type="cofactor">
    <cofactor evidence="1">
        <name>Mn(2+)</name>
        <dbReference type="ChEBI" id="CHEBI:29035"/>
    </cofactor>
    <text evidence="1">Binds 1 Mn(2+) ion per subunit.</text>
</comment>
<comment type="pathway">
    <text evidence="1">Carbohydrate degradation; L-arabinose degradation via L-ribulose; D-xylulose 5-phosphate from L-arabinose (bacterial route): step 1/3.</text>
</comment>
<comment type="subunit">
    <text evidence="1">Homohexamer.</text>
</comment>
<comment type="similarity">
    <text evidence="1">Belongs to the arabinose isomerase family.</text>
</comment>
<sequence>MTIFDNYEVWFVIGSQHLYGPETLRQVTQHAEHVVNALNTEAKLPCKLVLKPLGTTPDEITAICRDANYDDRCAGLVVWLHTFSPAKMWINGLTMLNKPLLQFHTQFNAALPWDSIDMDFMNLNQTAHGGREFGFIGARMRQQHAVVTGHWQDKQAHERIGSWMRQAVSKQDTRHLKVCRFGDNMREVAVTDGDKVAAQIKFGFSVNTWAVGDLVQVVNSISDGDVNALVDEYESCYTMTPATQIHGEKRQNVLEAARIELGMKRFLEQGGFHAFTTTFEDLHGLKQLPGLAVQRLMQQGYGFAGEGDWKTAALLRIMKVMSTGLQGGTSFMEDYTYHFEKGNDLVLGSHMLEVCPSIAVEEKPILDVQHLGIGGKDDPARLIFNTQTGPAIVASLIDLGDRYRLLVNCIDTVKTPHSLPKLPVANALWKAQPDLPSASEAWILAGGAHHTVFSHALNLNDMRQFAEMHDIEITVIDNDTRLPAFKDALRWNEVYYGFRR</sequence>
<name>ARAA_ECOL6</name>
<organism>
    <name type="scientific">Escherichia coli O6:H1 (strain CFT073 / ATCC 700928 / UPEC)</name>
    <dbReference type="NCBI Taxonomy" id="199310"/>
    <lineage>
        <taxon>Bacteria</taxon>
        <taxon>Pseudomonadati</taxon>
        <taxon>Pseudomonadota</taxon>
        <taxon>Gammaproteobacteria</taxon>
        <taxon>Enterobacterales</taxon>
        <taxon>Enterobacteriaceae</taxon>
        <taxon>Escherichia</taxon>
    </lineage>
</organism>
<reference key="1">
    <citation type="journal article" date="2002" name="Proc. Natl. Acad. Sci. U.S.A.">
        <title>Extensive mosaic structure revealed by the complete genome sequence of uropathogenic Escherichia coli.</title>
        <authorList>
            <person name="Welch R.A."/>
            <person name="Burland V."/>
            <person name="Plunkett G. III"/>
            <person name="Redford P."/>
            <person name="Roesch P."/>
            <person name="Rasko D."/>
            <person name="Buckles E.L."/>
            <person name="Liou S.-R."/>
            <person name="Boutin A."/>
            <person name="Hackett J."/>
            <person name="Stroud D."/>
            <person name="Mayhew G.F."/>
            <person name="Rose D.J."/>
            <person name="Zhou S."/>
            <person name="Schwartz D.C."/>
            <person name="Perna N.T."/>
            <person name="Mobley H.L.T."/>
            <person name="Donnenberg M.S."/>
            <person name="Blattner F.R."/>
        </authorList>
    </citation>
    <scope>NUCLEOTIDE SEQUENCE [LARGE SCALE GENOMIC DNA]</scope>
    <source>
        <strain>CFT073 / ATCC 700928 / UPEC</strain>
    </source>
</reference>
<keyword id="KW-0054">Arabinose catabolism</keyword>
<keyword id="KW-0119">Carbohydrate metabolism</keyword>
<keyword id="KW-0413">Isomerase</keyword>
<keyword id="KW-0464">Manganese</keyword>
<keyword id="KW-0479">Metal-binding</keyword>
<keyword id="KW-1185">Reference proteome</keyword>
<gene>
    <name evidence="1" type="primary">araA</name>
    <name type="ordered locus">c0074</name>
</gene>
<feature type="chain" id="PRO_0000198386" description="L-arabinose isomerase">
    <location>
        <begin position="1"/>
        <end position="500"/>
    </location>
</feature>
<feature type="binding site" evidence="1">
    <location>
        <position position="306"/>
    </location>
    <ligand>
        <name>Mn(2+)</name>
        <dbReference type="ChEBI" id="CHEBI:29035"/>
    </ligand>
</feature>
<feature type="binding site" evidence="1">
    <location>
        <position position="333"/>
    </location>
    <ligand>
        <name>Mn(2+)</name>
        <dbReference type="ChEBI" id="CHEBI:29035"/>
    </ligand>
</feature>
<feature type="binding site" evidence="1">
    <location>
        <position position="350"/>
    </location>
    <ligand>
        <name>Mn(2+)</name>
        <dbReference type="ChEBI" id="CHEBI:29035"/>
    </ligand>
</feature>
<feature type="binding site" evidence="1">
    <location>
        <position position="450"/>
    </location>
    <ligand>
        <name>Mn(2+)</name>
        <dbReference type="ChEBI" id="CHEBI:29035"/>
    </ligand>
</feature>
<proteinExistence type="inferred from homology"/>
<evidence type="ECO:0000255" key="1">
    <source>
        <dbReference type="HAMAP-Rule" id="MF_00519"/>
    </source>
</evidence>